<keyword id="KW-0067">ATP-binding</keyword>
<keyword id="KW-0436">Ligase</keyword>
<keyword id="KW-0547">Nucleotide-binding</keyword>
<keyword id="KW-0554">One-carbon metabolism</keyword>
<protein>
    <recommendedName>
        <fullName evidence="1">Formate--tetrahydrofolate ligase</fullName>
        <ecNumber evidence="1">6.3.4.3</ecNumber>
    </recommendedName>
    <alternativeName>
        <fullName evidence="1">Formyltetrahydrofolate synthetase</fullName>
        <shortName evidence="1">FHS</shortName>
        <shortName evidence="1">FTHFS</shortName>
    </alternativeName>
</protein>
<feature type="chain" id="PRO_1000185244" description="Formate--tetrahydrofolate ligase">
    <location>
        <begin position="1"/>
        <end position="562"/>
    </location>
</feature>
<feature type="binding site" evidence="1">
    <location>
        <begin position="71"/>
        <end position="78"/>
    </location>
    <ligand>
        <name>ATP</name>
        <dbReference type="ChEBI" id="CHEBI:30616"/>
    </ligand>
</feature>
<sequence length="562" mass="60489">MTTTTTVKSDIEIAQEANMKKIQEIAADLNILEDELEPYGHYKGKLSLDIFKRLQNEKDGKVVLVTAINPTPAGEGKSTVTVGLGQAFNKIGKKTVIALREPSLGPTMGLKGGAAGGGFSQVVPMEDINLHFTGDIHAITTANNALAAFIDNHIQQGNTLGIDTRKIVWKRCVDLNDRALRNVVIGLGGPVQGVPREDGFDITVASEIMAVFCLATDIQDLKARLSRIVVAYNFANQPVTVKDLGVEGALTLLLKDALKPNLVQTLENTPAIIHGGPFANIAHGCNSVIATTMAAKLGDYVITEAGFGADLGAEKFLDIKARAAGIKPEAVVIVATIRALKMHGGVAKDQLKEENVDALAKGMENLQKHVETIQSFGVPFVIAINKFITDTDAEVAYLQEWCNERGYAVSLTEVWEKGGQGGVDLAEKVLKEIEKGENNYAPLYELELPLEEKIRTIAQKVYGAKDIEFAPKARKQLAQYEGEGWSNLPICMAKTQYSLSDDATKLGRPSDFIVTIRELKPSIGAGFIVALTGTMLTMPGLPKQPAALQMDVNEDGKAVGLF</sequence>
<comment type="catalytic activity">
    <reaction evidence="1">
        <text>(6S)-5,6,7,8-tetrahydrofolate + formate + ATP = (6R)-10-formyltetrahydrofolate + ADP + phosphate</text>
        <dbReference type="Rhea" id="RHEA:20221"/>
        <dbReference type="ChEBI" id="CHEBI:15740"/>
        <dbReference type="ChEBI" id="CHEBI:30616"/>
        <dbReference type="ChEBI" id="CHEBI:43474"/>
        <dbReference type="ChEBI" id="CHEBI:57453"/>
        <dbReference type="ChEBI" id="CHEBI:195366"/>
        <dbReference type="ChEBI" id="CHEBI:456216"/>
        <dbReference type="EC" id="6.3.4.3"/>
    </reaction>
</comment>
<comment type="pathway">
    <text evidence="1">One-carbon metabolism; tetrahydrofolate interconversion.</text>
</comment>
<comment type="similarity">
    <text evidence="1">Belongs to the formate--tetrahydrofolate ligase family.</text>
</comment>
<gene>
    <name evidence="1" type="primary">fhs</name>
    <name type="ordered locus">BAA_2173</name>
</gene>
<proteinExistence type="inferred from homology"/>
<dbReference type="EC" id="6.3.4.3" evidence="1"/>
<dbReference type="EMBL" id="CP001598">
    <property type="protein sequence ID" value="ACQ46828.1"/>
    <property type="molecule type" value="Genomic_DNA"/>
</dbReference>
<dbReference type="RefSeq" id="WP_003159099.1">
    <property type="nucleotide sequence ID" value="NC_012659.1"/>
</dbReference>
<dbReference type="SMR" id="C3P858"/>
<dbReference type="GeneID" id="45022019"/>
<dbReference type="KEGG" id="bai:BAA_2173"/>
<dbReference type="HOGENOM" id="CLU_003601_3_3_9"/>
<dbReference type="UniPathway" id="UPA00193"/>
<dbReference type="GO" id="GO:0005524">
    <property type="term" value="F:ATP binding"/>
    <property type="evidence" value="ECO:0007669"/>
    <property type="project" value="UniProtKB-UniRule"/>
</dbReference>
<dbReference type="GO" id="GO:0004329">
    <property type="term" value="F:formate-tetrahydrofolate ligase activity"/>
    <property type="evidence" value="ECO:0007669"/>
    <property type="project" value="UniProtKB-UniRule"/>
</dbReference>
<dbReference type="GO" id="GO:0035999">
    <property type="term" value="P:tetrahydrofolate interconversion"/>
    <property type="evidence" value="ECO:0007669"/>
    <property type="project" value="UniProtKB-UniRule"/>
</dbReference>
<dbReference type="CDD" id="cd00477">
    <property type="entry name" value="FTHFS"/>
    <property type="match status" value="1"/>
</dbReference>
<dbReference type="FunFam" id="3.30.1510.10:FF:000001">
    <property type="entry name" value="Formate--tetrahydrofolate ligase"/>
    <property type="match status" value="1"/>
</dbReference>
<dbReference type="FunFam" id="3.10.410.10:FF:000001">
    <property type="entry name" value="Putative formate--tetrahydrofolate ligase"/>
    <property type="match status" value="1"/>
</dbReference>
<dbReference type="Gene3D" id="3.30.1510.10">
    <property type="entry name" value="Domain 2, N(10)-formyltetrahydrofolate synthetase"/>
    <property type="match status" value="1"/>
</dbReference>
<dbReference type="Gene3D" id="3.10.410.10">
    <property type="entry name" value="Formyltetrahydrofolate synthetase, domain 3"/>
    <property type="match status" value="1"/>
</dbReference>
<dbReference type="Gene3D" id="3.40.50.300">
    <property type="entry name" value="P-loop containing nucleotide triphosphate hydrolases"/>
    <property type="match status" value="1"/>
</dbReference>
<dbReference type="HAMAP" id="MF_01543">
    <property type="entry name" value="FTHFS"/>
    <property type="match status" value="1"/>
</dbReference>
<dbReference type="InterPro" id="IPR000559">
    <property type="entry name" value="Formate_THF_ligase"/>
</dbReference>
<dbReference type="InterPro" id="IPR020628">
    <property type="entry name" value="Formate_THF_ligase_CS"/>
</dbReference>
<dbReference type="InterPro" id="IPR027417">
    <property type="entry name" value="P-loop_NTPase"/>
</dbReference>
<dbReference type="NCBIfam" id="NF010030">
    <property type="entry name" value="PRK13505.1"/>
    <property type="match status" value="1"/>
</dbReference>
<dbReference type="Pfam" id="PF01268">
    <property type="entry name" value="FTHFS"/>
    <property type="match status" value="1"/>
</dbReference>
<dbReference type="SUPFAM" id="SSF52540">
    <property type="entry name" value="P-loop containing nucleoside triphosphate hydrolases"/>
    <property type="match status" value="1"/>
</dbReference>
<dbReference type="PROSITE" id="PS00721">
    <property type="entry name" value="FTHFS_1"/>
    <property type="match status" value="1"/>
</dbReference>
<dbReference type="PROSITE" id="PS00722">
    <property type="entry name" value="FTHFS_2"/>
    <property type="match status" value="1"/>
</dbReference>
<accession>C3P858</accession>
<organism>
    <name type="scientific">Bacillus anthracis (strain A0248)</name>
    <dbReference type="NCBI Taxonomy" id="592021"/>
    <lineage>
        <taxon>Bacteria</taxon>
        <taxon>Bacillati</taxon>
        <taxon>Bacillota</taxon>
        <taxon>Bacilli</taxon>
        <taxon>Bacillales</taxon>
        <taxon>Bacillaceae</taxon>
        <taxon>Bacillus</taxon>
        <taxon>Bacillus cereus group</taxon>
    </lineage>
</organism>
<name>FTHS_BACAA</name>
<reference key="1">
    <citation type="submission" date="2009-04" db="EMBL/GenBank/DDBJ databases">
        <title>Genome sequence of Bacillus anthracis A0248.</title>
        <authorList>
            <person name="Dodson R.J."/>
            <person name="Munk A.C."/>
            <person name="Bruce D."/>
            <person name="Detter C."/>
            <person name="Tapia R."/>
            <person name="Sutton G."/>
            <person name="Sims D."/>
            <person name="Brettin T."/>
        </authorList>
    </citation>
    <scope>NUCLEOTIDE SEQUENCE [LARGE SCALE GENOMIC DNA]</scope>
    <source>
        <strain>A0248</strain>
    </source>
</reference>
<evidence type="ECO:0000255" key="1">
    <source>
        <dbReference type="HAMAP-Rule" id="MF_01543"/>
    </source>
</evidence>